<comment type="function">
    <text evidence="1">Involved in the binding of tRNA to the ribosomes.</text>
</comment>
<comment type="subunit">
    <text evidence="1">Part of the 30S ribosomal subunit.</text>
</comment>
<comment type="similarity">
    <text evidence="1">Belongs to the universal ribosomal protein uS10 family.</text>
</comment>
<proteinExistence type="inferred from homology"/>
<keyword id="KW-0687">Ribonucleoprotein</keyword>
<keyword id="KW-0689">Ribosomal protein</keyword>
<evidence type="ECO:0000255" key="1">
    <source>
        <dbReference type="HAMAP-Rule" id="MF_00508"/>
    </source>
</evidence>
<evidence type="ECO:0000305" key="2"/>
<gene>
    <name evidence="1" type="primary">rps10</name>
    <name type="ordered locus">M164_1927</name>
</gene>
<dbReference type="EMBL" id="CP001402">
    <property type="protein sequence ID" value="ACR42530.1"/>
    <property type="molecule type" value="Genomic_DNA"/>
</dbReference>
<dbReference type="SMR" id="C4KIW6"/>
<dbReference type="KEGG" id="sid:M164_1927"/>
<dbReference type="HOGENOM" id="CLU_122625_0_1_2"/>
<dbReference type="Proteomes" id="UP000001479">
    <property type="component" value="Chromosome"/>
</dbReference>
<dbReference type="GO" id="GO:0015935">
    <property type="term" value="C:small ribosomal subunit"/>
    <property type="evidence" value="ECO:0007669"/>
    <property type="project" value="InterPro"/>
</dbReference>
<dbReference type="GO" id="GO:0003735">
    <property type="term" value="F:structural constituent of ribosome"/>
    <property type="evidence" value="ECO:0007669"/>
    <property type="project" value="InterPro"/>
</dbReference>
<dbReference type="GO" id="GO:0000049">
    <property type="term" value="F:tRNA binding"/>
    <property type="evidence" value="ECO:0007669"/>
    <property type="project" value="UniProtKB-UniRule"/>
</dbReference>
<dbReference type="GO" id="GO:0006412">
    <property type="term" value="P:translation"/>
    <property type="evidence" value="ECO:0007669"/>
    <property type="project" value="UniProtKB-UniRule"/>
</dbReference>
<dbReference type="FunFam" id="3.30.70.600:FF:000004">
    <property type="entry name" value="30S ribosomal protein S10"/>
    <property type="match status" value="1"/>
</dbReference>
<dbReference type="Gene3D" id="3.30.70.600">
    <property type="entry name" value="Ribosomal protein S10 domain"/>
    <property type="match status" value="1"/>
</dbReference>
<dbReference type="HAMAP" id="MF_00508">
    <property type="entry name" value="Ribosomal_uS10"/>
    <property type="match status" value="1"/>
</dbReference>
<dbReference type="InterPro" id="IPR001848">
    <property type="entry name" value="Ribosomal_uS10"/>
</dbReference>
<dbReference type="InterPro" id="IPR018268">
    <property type="entry name" value="Ribosomal_uS10_CS"/>
</dbReference>
<dbReference type="InterPro" id="IPR027486">
    <property type="entry name" value="Ribosomal_uS10_dom"/>
</dbReference>
<dbReference type="InterPro" id="IPR036838">
    <property type="entry name" value="Ribosomal_uS10_dom_sf"/>
</dbReference>
<dbReference type="InterPro" id="IPR005729">
    <property type="entry name" value="Ribosomal_uS10_euk/arc"/>
</dbReference>
<dbReference type="NCBIfam" id="TIGR01046">
    <property type="entry name" value="uS10_euk_arch"/>
    <property type="match status" value="1"/>
</dbReference>
<dbReference type="PANTHER" id="PTHR11700">
    <property type="entry name" value="30S RIBOSOMAL PROTEIN S10 FAMILY MEMBER"/>
    <property type="match status" value="1"/>
</dbReference>
<dbReference type="Pfam" id="PF00338">
    <property type="entry name" value="Ribosomal_S10"/>
    <property type="match status" value="1"/>
</dbReference>
<dbReference type="PRINTS" id="PR00971">
    <property type="entry name" value="RIBOSOMALS10"/>
</dbReference>
<dbReference type="SMART" id="SM01403">
    <property type="entry name" value="Ribosomal_S10"/>
    <property type="match status" value="1"/>
</dbReference>
<dbReference type="SUPFAM" id="SSF54999">
    <property type="entry name" value="Ribosomal protein S10"/>
    <property type="match status" value="1"/>
</dbReference>
<dbReference type="PROSITE" id="PS00361">
    <property type="entry name" value="RIBOSOMAL_S10"/>
    <property type="match status" value="1"/>
</dbReference>
<protein>
    <recommendedName>
        <fullName evidence="1">Small ribosomal subunit protein uS10</fullName>
    </recommendedName>
    <alternativeName>
        <fullName evidence="2">30S ribosomal protein S10</fullName>
    </alternativeName>
</protein>
<sequence>MPTKARIRLWSTNVENLNYVITQIRGIVEKTGIEMRGPIPLPTSKLEVPIMRLPHGEGRKKWEKWEMRVHKRLIDIAADERVMRQLMRVRVPEDVYIEIQLI</sequence>
<accession>C4KIW6</accession>
<name>RS10_SACI6</name>
<reference key="1">
    <citation type="journal article" date="2009" name="Proc. Natl. Acad. Sci. U.S.A.">
        <title>Biogeography of the Sulfolobus islandicus pan-genome.</title>
        <authorList>
            <person name="Reno M.L."/>
            <person name="Held N.L."/>
            <person name="Fields C.J."/>
            <person name="Burke P.V."/>
            <person name="Whitaker R.J."/>
        </authorList>
    </citation>
    <scope>NUCLEOTIDE SEQUENCE [LARGE SCALE GENOMIC DNA]</scope>
    <source>
        <strain>M.16.4 / Kamchatka #3</strain>
    </source>
</reference>
<feature type="chain" id="PRO_1000206599" description="Small ribosomal subunit protein uS10">
    <location>
        <begin position="1"/>
        <end position="102"/>
    </location>
</feature>
<organism>
    <name type="scientific">Saccharolobus islandicus (strain M.16.4 / Kamchatka #3)</name>
    <name type="common">Sulfolobus islandicus</name>
    <dbReference type="NCBI Taxonomy" id="426118"/>
    <lineage>
        <taxon>Archaea</taxon>
        <taxon>Thermoproteota</taxon>
        <taxon>Thermoprotei</taxon>
        <taxon>Sulfolobales</taxon>
        <taxon>Sulfolobaceae</taxon>
        <taxon>Saccharolobus</taxon>
    </lineage>
</organism>